<protein>
    <recommendedName>
        <fullName>Microsomal triglyceride transfer protein large subunit</fullName>
    </recommendedName>
</protein>
<comment type="function">
    <text evidence="1 5 6">Catalyzes the transport of triglyceride, cholesteryl ester, and phospholipid between phospholipid surfaces (PubMed:15897609, PubMed:16478722). Required for the assembly and secretion of plasma lipoproteins that contain apolipoprotein B (By similarity). May be involved in regulating cholesteryl ester biosynthesis in cells that produce lipoproteins (By similarity).</text>
</comment>
<comment type="catalytic activity">
    <reaction evidence="6">
        <text>a 1,2-diacyl-sn-glycero-3-phosphocholine(in) = a 1,2-diacyl-sn-glycero-3-phosphocholine(out)</text>
        <dbReference type="Rhea" id="RHEA:38571"/>
        <dbReference type="ChEBI" id="CHEBI:57643"/>
    </reaction>
    <physiologicalReaction direction="left-to-right" evidence="8">
        <dbReference type="Rhea" id="RHEA:38572"/>
    </physiologicalReaction>
</comment>
<comment type="catalytic activity">
    <reaction evidence="5">
        <text>a 1,2-diacyl-sn-glycero-3-phosphoethanolamine(in) = a 1,2-diacyl-sn-glycero-3-phosphoethanolamine(out)</text>
        <dbReference type="Rhea" id="RHEA:38895"/>
        <dbReference type="ChEBI" id="CHEBI:64612"/>
    </reaction>
    <physiologicalReaction direction="left-to-right" evidence="7">
        <dbReference type="Rhea" id="RHEA:38896"/>
    </physiologicalReaction>
</comment>
<comment type="catalytic activity">
    <reaction evidence="5">
        <text>a cholesterol ester(in) = a cholesterol ester(out)</text>
        <dbReference type="Rhea" id="RHEA:39007"/>
        <dbReference type="ChEBI" id="CHEBI:17002"/>
    </reaction>
    <physiologicalReaction direction="left-to-right" evidence="7">
        <dbReference type="Rhea" id="RHEA:39008"/>
    </physiologicalReaction>
</comment>
<comment type="catalytic activity">
    <reaction evidence="5 6">
        <text>a triacyl-sn-glycerol(in) = a triacyl-sn-glycerol(out)</text>
        <dbReference type="Rhea" id="RHEA:39011"/>
        <dbReference type="ChEBI" id="CHEBI:64615"/>
    </reaction>
    <physiologicalReaction direction="left-to-right" evidence="7">
        <dbReference type="Rhea" id="RHEA:39012"/>
    </physiologicalReaction>
</comment>
<comment type="subunit">
    <text evidence="1 2">Heterodimer; heterodimerizes with the protein disulfide isomerase (P4HB/PDI) (By similarity). Interacts with APOB (By similarity). Interacts with PRAP1 (By similarity).</text>
</comment>
<comment type="subcellular location">
    <subcellularLocation>
        <location evidence="2">Endoplasmic reticulum</location>
    </subcellularLocation>
    <subcellularLocation>
        <location evidence="2">Golgi apparatus</location>
    </subcellularLocation>
    <text evidence="2">Colocalizes with P4HB/PDI in the endoplasmic reticulum.</text>
</comment>
<keyword id="KW-1015">Disulfide bond</keyword>
<keyword id="KW-0256">Endoplasmic reticulum</keyword>
<keyword id="KW-0333">Golgi apparatus</keyword>
<keyword id="KW-0445">Lipid transport</keyword>
<keyword id="KW-0446">Lipid-binding</keyword>
<keyword id="KW-1185">Reference proteome</keyword>
<keyword id="KW-0732">Signal</keyword>
<keyword id="KW-0813">Transport</keyword>
<proteinExistence type="evidence at protein level"/>
<dbReference type="EMBL" id="AABR07013550">
    <property type="status" value="NOT_ANNOTATED_CDS"/>
    <property type="molecule type" value="Genomic_DNA"/>
</dbReference>
<dbReference type="EMBL" id="AABR07013551">
    <property type="status" value="NOT_ANNOTATED_CDS"/>
    <property type="molecule type" value="Genomic_DNA"/>
</dbReference>
<dbReference type="EMBL" id="CH473952">
    <property type="protein sequence ID" value="EDL82305.1"/>
    <property type="molecule type" value="Genomic_DNA"/>
</dbReference>
<dbReference type="RefSeq" id="NP_001101197.1">
    <property type="nucleotide sequence ID" value="NM_001107727.1"/>
</dbReference>
<dbReference type="SMR" id="D4A1W8"/>
<dbReference type="FunCoup" id="D4A1W8">
    <property type="interactions" value="504"/>
</dbReference>
<dbReference type="STRING" id="10116.ENSRNOP00000014630"/>
<dbReference type="SwissLipids" id="SLP:000000410"/>
<dbReference type="iPTMnet" id="D4A1W8"/>
<dbReference type="PhosphoSitePlus" id="D4A1W8"/>
<dbReference type="PaxDb" id="10116-ENSRNOP00000014630"/>
<dbReference type="PeptideAtlas" id="D4A1W8"/>
<dbReference type="Ensembl" id="ENSRNOT00000014631.7">
    <property type="protein sequence ID" value="ENSRNOP00000014630.4"/>
    <property type="gene ID" value="ENSRNOG00000010655.7"/>
</dbReference>
<dbReference type="GeneID" id="310900"/>
<dbReference type="KEGG" id="rno:310900"/>
<dbReference type="AGR" id="RGD:1308388"/>
<dbReference type="CTD" id="4547"/>
<dbReference type="RGD" id="1308388">
    <property type="gene designation" value="Mttp"/>
</dbReference>
<dbReference type="eggNOG" id="KOG4337">
    <property type="taxonomic scope" value="Eukaryota"/>
</dbReference>
<dbReference type="GeneTree" id="ENSGT00390000011412"/>
<dbReference type="HOGENOM" id="CLU_014703_0_0_1"/>
<dbReference type="InParanoid" id="D4A1W8"/>
<dbReference type="OMA" id="HVWGGSA"/>
<dbReference type="OrthoDB" id="32404at9989"/>
<dbReference type="PhylomeDB" id="D4A1W8"/>
<dbReference type="TreeFam" id="TF328754"/>
<dbReference type="Reactome" id="R-RNO-8866423">
    <property type="pathway name" value="VLDL assembly"/>
</dbReference>
<dbReference type="Reactome" id="R-RNO-8963888">
    <property type="pathway name" value="Chylomicron assembly"/>
</dbReference>
<dbReference type="Reactome" id="R-RNO-8964041">
    <property type="pathway name" value="LDL remodeling"/>
</dbReference>
<dbReference type="PRO" id="PR:D4A1W8"/>
<dbReference type="Proteomes" id="UP000002494">
    <property type="component" value="Chromosome 2"/>
</dbReference>
<dbReference type="Proteomes" id="UP000234681">
    <property type="component" value="Chromosome 2"/>
</dbReference>
<dbReference type="Bgee" id="ENSRNOG00000010655">
    <property type="expression patterns" value="Expressed in jejunum and 13 other cell types or tissues"/>
</dbReference>
<dbReference type="GO" id="GO:0016323">
    <property type="term" value="C:basolateral plasma membrane"/>
    <property type="evidence" value="ECO:0000314"/>
    <property type="project" value="RGD"/>
</dbReference>
<dbReference type="GO" id="GO:0031526">
    <property type="term" value="C:brush border membrane"/>
    <property type="evidence" value="ECO:0000314"/>
    <property type="project" value="RGD"/>
</dbReference>
<dbReference type="GO" id="GO:0005829">
    <property type="term" value="C:cytosol"/>
    <property type="evidence" value="ECO:0007669"/>
    <property type="project" value="Ensembl"/>
</dbReference>
<dbReference type="GO" id="GO:0005783">
    <property type="term" value="C:endoplasmic reticulum"/>
    <property type="evidence" value="ECO:0000266"/>
    <property type="project" value="RGD"/>
</dbReference>
<dbReference type="GO" id="GO:0005794">
    <property type="term" value="C:Golgi apparatus"/>
    <property type="evidence" value="ECO:0000266"/>
    <property type="project" value="RGD"/>
</dbReference>
<dbReference type="GO" id="GO:0031528">
    <property type="term" value="C:microvillus membrane"/>
    <property type="evidence" value="ECO:0000314"/>
    <property type="project" value="RGD"/>
</dbReference>
<dbReference type="GO" id="GO:0043235">
    <property type="term" value="C:receptor complex"/>
    <property type="evidence" value="ECO:0000266"/>
    <property type="project" value="RGD"/>
</dbReference>
<dbReference type="GO" id="GO:0031982">
    <property type="term" value="C:vesicle"/>
    <property type="evidence" value="ECO:0000314"/>
    <property type="project" value="RGD"/>
</dbReference>
<dbReference type="GO" id="GO:0034185">
    <property type="term" value="F:apolipoprotein binding"/>
    <property type="evidence" value="ECO:0000353"/>
    <property type="project" value="RGD"/>
</dbReference>
<dbReference type="GO" id="GO:1902388">
    <property type="term" value="F:ceramide 1-phosphate transfer activity"/>
    <property type="evidence" value="ECO:0000266"/>
    <property type="project" value="RGD"/>
</dbReference>
<dbReference type="GO" id="GO:0120020">
    <property type="term" value="F:cholesterol transfer activity"/>
    <property type="evidence" value="ECO:0000314"/>
    <property type="project" value="UniProtKB"/>
</dbReference>
<dbReference type="GO" id="GO:0008289">
    <property type="term" value="F:lipid binding"/>
    <property type="evidence" value="ECO:0007669"/>
    <property type="project" value="UniProtKB-KW"/>
</dbReference>
<dbReference type="GO" id="GO:0005319">
    <property type="term" value="F:lipid transporter activity"/>
    <property type="evidence" value="ECO:0000314"/>
    <property type="project" value="RGD"/>
</dbReference>
<dbReference type="GO" id="GO:0120019">
    <property type="term" value="F:phosphatidylcholine transfer activity"/>
    <property type="evidence" value="ECO:0000315"/>
    <property type="project" value="UniProtKB"/>
</dbReference>
<dbReference type="GO" id="GO:1904121">
    <property type="term" value="F:phosphatidylethanolamine transfer activity"/>
    <property type="evidence" value="ECO:0000314"/>
    <property type="project" value="UniProtKB"/>
</dbReference>
<dbReference type="GO" id="GO:0120014">
    <property type="term" value="F:phospholipid transfer activity"/>
    <property type="evidence" value="ECO:0000266"/>
    <property type="project" value="RGD"/>
</dbReference>
<dbReference type="GO" id="GO:0005548">
    <property type="term" value="F:phospholipid transporter activity"/>
    <property type="evidence" value="ECO:0000318"/>
    <property type="project" value="GO_Central"/>
</dbReference>
<dbReference type="GO" id="GO:0046982">
    <property type="term" value="F:protein heterodimerization activity"/>
    <property type="evidence" value="ECO:0000266"/>
    <property type="project" value="RGD"/>
</dbReference>
<dbReference type="GO" id="GO:0044877">
    <property type="term" value="F:protein-containing complex binding"/>
    <property type="evidence" value="ECO:0000353"/>
    <property type="project" value="RGD"/>
</dbReference>
<dbReference type="GO" id="GO:0140344">
    <property type="term" value="F:triglyceride transfer activity"/>
    <property type="evidence" value="ECO:0000314"/>
    <property type="project" value="UniProtKB"/>
</dbReference>
<dbReference type="GO" id="GO:0042632">
    <property type="term" value="P:cholesterol homeostasis"/>
    <property type="evidence" value="ECO:0000270"/>
    <property type="project" value="RGD"/>
</dbReference>
<dbReference type="GO" id="GO:0007623">
    <property type="term" value="P:circadian rhythm"/>
    <property type="evidence" value="ECO:0000266"/>
    <property type="project" value="RGD"/>
</dbReference>
<dbReference type="GO" id="GO:0051649">
    <property type="term" value="P:establishment of localization in cell"/>
    <property type="evidence" value="ECO:0000266"/>
    <property type="project" value="RGD"/>
</dbReference>
<dbReference type="GO" id="GO:0006629">
    <property type="term" value="P:lipid metabolic process"/>
    <property type="evidence" value="ECO:0000266"/>
    <property type="project" value="RGD"/>
</dbReference>
<dbReference type="GO" id="GO:0006869">
    <property type="term" value="P:lipid transport"/>
    <property type="evidence" value="ECO:0000314"/>
    <property type="project" value="RGD"/>
</dbReference>
<dbReference type="GO" id="GO:0042157">
    <property type="term" value="P:lipoprotein metabolic process"/>
    <property type="evidence" value="ECO:0000314"/>
    <property type="project" value="RGD"/>
</dbReference>
<dbReference type="GO" id="GO:0042953">
    <property type="term" value="P:lipoprotein transport"/>
    <property type="evidence" value="ECO:0000266"/>
    <property type="project" value="RGD"/>
</dbReference>
<dbReference type="GO" id="GO:0034374">
    <property type="term" value="P:low-density lipoprotein particle remodeling"/>
    <property type="evidence" value="ECO:0000266"/>
    <property type="project" value="RGD"/>
</dbReference>
<dbReference type="GO" id="GO:0015914">
    <property type="term" value="P:phospholipid transport"/>
    <property type="evidence" value="ECO:0000266"/>
    <property type="project" value="RGD"/>
</dbReference>
<dbReference type="GO" id="GO:0034377">
    <property type="term" value="P:plasma lipoprotein particle assembly"/>
    <property type="evidence" value="ECO:0000250"/>
    <property type="project" value="UniProtKB"/>
</dbReference>
<dbReference type="GO" id="GO:0009306">
    <property type="term" value="P:protein secretion"/>
    <property type="evidence" value="ECO:0000250"/>
    <property type="project" value="UniProtKB"/>
</dbReference>
<dbReference type="GO" id="GO:0051592">
    <property type="term" value="P:response to calcium ion"/>
    <property type="evidence" value="ECO:0000270"/>
    <property type="project" value="RGD"/>
</dbReference>
<dbReference type="GO" id="GO:0006641">
    <property type="term" value="P:triglyceride metabolic process"/>
    <property type="evidence" value="ECO:0000266"/>
    <property type="project" value="RGD"/>
</dbReference>
<dbReference type="GO" id="GO:0034197">
    <property type="term" value="P:triglyceride transport"/>
    <property type="evidence" value="ECO:0000266"/>
    <property type="project" value="RGD"/>
</dbReference>
<dbReference type="FunFam" id="2.30.230.10:FF:000001">
    <property type="entry name" value="Microsomal triglyceride transfer protein large subunit"/>
    <property type="match status" value="1"/>
</dbReference>
<dbReference type="FunFam" id="1.25.10.20:FF:000001">
    <property type="entry name" value="microsomal triglyceride transfer protein large subunit"/>
    <property type="match status" value="1"/>
</dbReference>
<dbReference type="Gene3D" id="2.30.230.10">
    <property type="entry name" value="Lipovitellin, beta-sheet shell regions, chain A"/>
    <property type="match status" value="1"/>
</dbReference>
<dbReference type="Gene3D" id="1.25.10.20">
    <property type="entry name" value="Vitellinogen, superhelical"/>
    <property type="match status" value="1"/>
</dbReference>
<dbReference type="InterPro" id="IPR015819">
    <property type="entry name" value="Lipid_transp_b-sht_shell"/>
</dbReference>
<dbReference type="InterPro" id="IPR011030">
    <property type="entry name" value="Lipovitellin_superhlx_dom"/>
</dbReference>
<dbReference type="InterPro" id="IPR045811">
    <property type="entry name" value="MTP_lip-bd"/>
</dbReference>
<dbReference type="InterPro" id="IPR039988">
    <property type="entry name" value="MTTP"/>
</dbReference>
<dbReference type="InterPro" id="IPR015816">
    <property type="entry name" value="Vitellinogen_b-sht_N"/>
</dbReference>
<dbReference type="InterPro" id="IPR001747">
    <property type="entry name" value="Vitellogenin_N"/>
</dbReference>
<dbReference type="PANTHER" id="PTHR13024:SF1">
    <property type="entry name" value="MICROSOMAL TRIGLYCERIDE TRANSFER PROTEIN LARGE SUBUNIT"/>
    <property type="match status" value="1"/>
</dbReference>
<dbReference type="PANTHER" id="PTHR13024">
    <property type="entry name" value="MICROSOMAL TRIGLYCERIDE TRANSFER PROTEIN, LARGE SUBUNIT"/>
    <property type="match status" value="1"/>
</dbReference>
<dbReference type="Pfam" id="PF19444">
    <property type="entry name" value="MTP_lip_bd"/>
    <property type="match status" value="1"/>
</dbReference>
<dbReference type="Pfam" id="PF01347">
    <property type="entry name" value="Vitellogenin_N"/>
    <property type="match status" value="1"/>
</dbReference>
<dbReference type="SMART" id="SM00638">
    <property type="entry name" value="LPD_N"/>
    <property type="match status" value="1"/>
</dbReference>
<dbReference type="SUPFAM" id="SSF56968">
    <property type="entry name" value="Lipovitellin-phosvitin complex, beta-sheet shell regions"/>
    <property type="match status" value="1"/>
</dbReference>
<dbReference type="SUPFAM" id="SSF48431">
    <property type="entry name" value="Lipovitellin-phosvitin complex, superhelical domain"/>
    <property type="match status" value="1"/>
</dbReference>
<dbReference type="PROSITE" id="PS51211">
    <property type="entry name" value="VITELLOGENIN"/>
    <property type="match status" value="1"/>
</dbReference>
<feature type="signal peptide" evidence="3">
    <location>
        <begin position="1"/>
        <end position="21"/>
    </location>
</feature>
<feature type="chain" id="PRO_5014087804" description="Microsomal triglyceride transfer protein large subunit">
    <location>
        <begin position="22"/>
        <end position="896"/>
    </location>
</feature>
<feature type="domain" description="Vitellogenin" evidence="4">
    <location>
        <begin position="28"/>
        <end position="659"/>
    </location>
</feature>
<feature type="disulfide bond" evidence="4">
    <location>
        <begin position="174"/>
        <end position="194"/>
    </location>
</feature>
<reference key="1">
    <citation type="journal article" date="2004" name="Nature">
        <title>Genome sequence of the Brown Norway rat yields insights into mammalian evolution.</title>
        <authorList>
            <person name="Gibbs R.A."/>
            <person name="Weinstock G.M."/>
            <person name="Metzker M.L."/>
            <person name="Muzny D.M."/>
            <person name="Sodergren E.J."/>
            <person name="Scherer S."/>
            <person name="Scott G."/>
            <person name="Steffen D."/>
            <person name="Worley K.C."/>
            <person name="Burch P.E."/>
            <person name="Okwuonu G."/>
            <person name="Hines S."/>
            <person name="Lewis L."/>
            <person name="Deramo C."/>
            <person name="Delgado O."/>
            <person name="Dugan-Rocha S."/>
            <person name="Miner G."/>
            <person name="Morgan M."/>
            <person name="Hawes A."/>
            <person name="Gill R."/>
            <person name="Holt R.A."/>
            <person name="Adams M.D."/>
            <person name="Amanatides P.G."/>
            <person name="Baden-Tillson H."/>
            <person name="Barnstead M."/>
            <person name="Chin S."/>
            <person name="Evans C.A."/>
            <person name="Ferriera S."/>
            <person name="Fosler C."/>
            <person name="Glodek A."/>
            <person name="Gu Z."/>
            <person name="Jennings D."/>
            <person name="Kraft C.L."/>
            <person name="Nguyen T."/>
            <person name="Pfannkoch C.M."/>
            <person name="Sitter C."/>
            <person name="Sutton G.G."/>
            <person name="Venter J.C."/>
            <person name="Woodage T."/>
            <person name="Smith D."/>
            <person name="Lee H.-M."/>
            <person name="Gustafson E."/>
            <person name="Cahill P."/>
            <person name="Kana A."/>
            <person name="Doucette-Stamm L."/>
            <person name="Weinstock K."/>
            <person name="Fechtel K."/>
            <person name="Weiss R.B."/>
            <person name="Dunn D.M."/>
            <person name="Green E.D."/>
            <person name="Blakesley R.W."/>
            <person name="Bouffard G.G."/>
            <person name="De Jong P.J."/>
            <person name="Osoegawa K."/>
            <person name="Zhu B."/>
            <person name="Marra M."/>
            <person name="Schein J."/>
            <person name="Bosdet I."/>
            <person name="Fjell C."/>
            <person name="Jones S."/>
            <person name="Krzywinski M."/>
            <person name="Mathewson C."/>
            <person name="Siddiqui A."/>
            <person name="Wye N."/>
            <person name="McPherson J."/>
            <person name="Zhao S."/>
            <person name="Fraser C.M."/>
            <person name="Shetty J."/>
            <person name="Shatsman S."/>
            <person name="Geer K."/>
            <person name="Chen Y."/>
            <person name="Abramzon S."/>
            <person name="Nierman W.C."/>
            <person name="Havlak P.H."/>
            <person name="Chen R."/>
            <person name="Durbin K.J."/>
            <person name="Egan A."/>
            <person name="Ren Y."/>
            <person name="Song X.-Z."/>
            <person name="Li B."/>
            <person name="Liu Y."/>
            <person name="Qin X."/>
            <person name="Cawley S."/>
            <person name="Cooney A.J."/>
            <person name="D'Souza L.M."/>
            <person name="Martin K."/>
            <person name="Wu J.Q."/>
            <person name="Gonzalez-Garay M.L."/>
            <person name="Jackson A.R."/>
            <person name="Kalafus K.J."/>
            <person name="McLeod M.P."/>
            <person name="Milosavljevic A."/>
            <person name="Virk D."/>
            <person name="Volkov A."/>
            <person name="Wheeler D.A."/>
            <person name="Zhang Z."/>
            <person name="Bailey J.A."/>
            <person name="Eichler E.E."/>
            <person name="Tuzun E."/>
            <person name="Birney E."/>
            <person name="Mongin E."/>
            <person name="Ureta-Vidal A."/>
            <person name="Woodwark C."/>
            <person name="Zdobnov E."/>
            <person name="Bork P."/>
            <person name="Suyama M."/>
            <person name="Torrents D."/>
            <person name="Alexandersson M."/>
            <person name="Trask B.J."/>
            <person name="Young J.M."/>
            <person name="Huang H."/>
            <person name="Wang H."/>
            <person name="Xing H."/>
            <person name="Daniels S."/>
            <person name="Gietzen D."/>
            <person name="Schmidt J."/>
            <person name="Stevens K."/>
            <person name="Vitt U."/>
            <person name="Wingrove J."/>
            <person name="Camara F."/>
            <person name="Mar Alba M."/>
            <person name="Abril J.F."/>
            <person name="Guigo R."/>
            <person name="Smit A."/>
            <person name="Dubchak I."/>
            <person name="Rubin E.M."/>
            <person name="Couronne O."/>
            <person name="Poliakov A."/>
            <person name="Huebner N."/>
            <person name="Ganten D."/>
            <person name="Goesele C."/>
            <person name="Hummel O."/>
            <person name="Kreitler T."/>
            <person name="Lee Y.-A."/>
            <person name="Monti J."/>
            <person name="Schulz H."/>
            <person name="Zimdahl H."/>
            <person name="Himmelbauer H."/>
            <person name="Lehrach H."/>
            <person name="Jacob H.J."/>
            <person name="Bromberg S."/>
            <person name="Gullings-Handley J."/>
            <person name="Jensen-Seaman M.I."/>
            <person name="Kwitek A.E."/>
            <person name="Lazar J."/>
            <person name="Pasko D."/>
            <person name="Tonellato P.J."/>
            <person name="Twigger S."/>
            <person name="Ponting C.P."/>
            <person name="Duarte J.M."/>
            <person name="Rice S."/>
            <person name="Goodstadt L."/>
            <person name="Beatson S.A."/>
            <person name="Emes R.D."/>
            <person name="Winter E.E."/>
            <person name="Webber C."/>
            <person name="Brandt P."/>
            <person name="Nyakatura G."/>
            <person name="Adetobi M."/>
            <person name="Chiaromonte F."/>
            <person name="Elnitski L."/>
            <person name="Eswara P."/>
            <person name="Hardison R.C."/>
            <person name="Hou M."/>
            <person name="Kolbe D."/>
            <person name="Makova K."/>
            <person name="Miller W."/>
            <person name="Nekrutenko A."/>
            <person name="Riemer C."/>
            <person name="Schwartz S."/>
            <person name="Taylor J."/>
            <person name="Yang S."/>
            <person name="Zhang Y."/>
            <person name="Lindpaintner K."/>
            <person name="Andrews T.D."/>
            <person name="Caccamo M."/>
            <person name="Clamp M."/>
            <person name="Clarke L."/>
            <person name="Curwen V."/>
            <person name="Durbin R.M."/>
            <person name="Eyras E."/>
            <person name="Searle S.M."/>
            <person name="Cooper G.M."/>
            <person name="Batzoglou S."/>
            <person name="Brudno M."/>
            <person name="Sidow A."/>
            <person name="Stone E.A."/>
            <person name="Payseur B.A."/>
            <person name="Bourque G."/>
            <person name="Lopez-Otin C."/>
            <person name="Puente X.S."/>
            <person name="Chakrabarti K."/>
            <person name="Chatterji S."/>
            <person name="Dewey C."/>
            <person name="Pachter L."/>
            <person name="Bray N."/>
            <person name="Yap V.B."/>
            <person name="Caspi A."/>
            <person name="Tesler G."/>
            <person name="Pevzner P.A."/>
            <person name="Haussler D."/>
            <person name="Roskin K.M."/>
            <person name="Baertsch R."/>
            <person name="Clawson H."/>
            <person name="Furey T.S."/>
            <person name="Hinrichs A.S."/>
            <person name="Karolchik D."/>
            <person name="Kent W.J."/>
            <person name="Rosenbloom K.R."/>
            <person name="Trumbower H."/>
            <person name="Weirauch M."/>
            <person name="Cooper D.N."/>
            <person name="Stenson P.D."/>
            <person name="Ma B."/>
            <person name="Brent M."/>
            <person name="Arumugam M."/>
            <person name="Shteynberg D."/>
            <person name="Copley R.R."/>
            <person name="Taylor M.S."/>
            <person name="Riethman H."/>
            <person name="Mudunuri U."/>
            <person name="Peterson J."/>
            <person name="Guyer M."/>
            <person name="Felsenfeld A."/>
            <person name="Old S."/>
            <person name="Mockrin S."/>
            <person name="Collins F.S."/>
        </authorList>
    </citation>
    <scope>NUCLEOTIDE SEQUENCE [LARGE SCALE GENOMIC DNA]</scope>
    <source>
        <strain>Brown Norway</strain>
    </source>
</reference>
<reference key="2">
    <citation type="submission" date="2005-07" db="EMBL/GenBank/DDBJ databases">
        <authorList>
            <person name="Mural R.J."/>
            <person name="Adams M.D."/>
            <person name="Myers E.W."/>
            <person name="Smith H.O."/>
            <person name="Venter J.C."/>
        </authorList>
    </citation>
    <scope>NUCLEOTIDE SEQUENCE [LARGE SCALE GENOMIC DNA]</scope>
    <source>
        <strain>Brown Norway</strain>
    </source>
</reference>
<reference key="3">
    <citation type="journal article" date="2005" name="J. Lipid Res.">
        <title>Transfer of cholesteryl esters and phospholipids as well as net deposition by microsomal triglyceride transfer protein.</title>
        <authorList>
            <person name="Rava P."/>
            <person name="Athar H."/>
            <person name="Johnson C."/>
            <person name="Hussain M.M."/>
        </authorList>
    </citation>
    <scope>FUNCTION</scope>
    <scope>CATALYTIC ACTIVITY</scope>
</reference>
<reference key="4">
    <citation type="journal article" date="2006" name="J. Biol. Chem.">
        <title>Phospholipid transfer activity of microsomal triacylglycerol transfer protein is sufficient for the assembly and secretion of apolipoprotein B lipoproteins.</title>
        <authorList>
            <person name="Rava P."/>
            <person name="Ojakian G.K."/>
            <person name="Shelness G.S."/>
            <person name="Hussain M.M."/>
        </authorList>
    </citation>
    <scope>FUNCTION</scope>
    <scope>CATALYTIC ACTIVITY</scope>
</reference>
<name>MTP_RAT</name>
<gene>
    <name type="primary">Mttp</name>
    <name type="synonym">Mtp</name>
</gene>
<sequence length="896" mass="99187">MILLAVLFLCFFSSYSASVKGHTTGLSLNNERLYKLTYSTEVFLDGGKGKLQDSVGYRISSDVDVVLLWRNPDGDDDQLIQVTITAVNVENAGQQRGEKSIFKGKSTPKIVGKDNLEALRRPMLLHLVRGKVKEFYSYENEPVGIENLKRGLASLFQMQLTSGTTNEVDISGDCKVTYQAQQDKVVKIKALDTCKIERSGFTTANQVLGVTSKATSVTTYKIEDSFVTAVVAEETRAFALNFLQTVAGKIVSKQKLELKTTEAGPRMVPGKQVAGVIKAIDSKYKAIPIVGQVLQSVCKGCPSLAEHWQSIRKHLEPENLSNAEAVQSFLAFIQHLRTSRREEILQILKAEKKEVLPQLVDAVTSAQTPASLEAILDFLDFKSDSSIILQERFLYACGFASHPDEELLQALLSKFKGSFASNDIRESVMIIIGALVRKLCQNEGCKLKAVVEAKKLILGGLEKPEKKEDTTMYLLALKNALLPEGIPLLLKYAEAGEGPVSHLATTVLQRYDASFITDEVKKTLNRIYHQNRKVHEKTVRTTAAAVILKNNPSYMDVKNILLSIGELPKEMNKYMLTIVQDILHFEMPASKMIRRVLKEMIVHNYDRFSKSGSSSAYTGYVERSPHAASTYSLDILYSGSGILRRSNLNIFQYIGKAELHGSQVVIEAQGLEGLIAATPDEGEENLDSYAGMSAILFDVQLRPVTFFNGYSDLMSKMLSASGDPVSVVKGLILLIDHSQDIQLQSGLKANMDIQGGLAIDISGSMEFSLWYRESKTRVKNRVAVVITSDITVDSSFVKAGLESRAETEAGLEFISTVQFSQYPFLVCMQMDKAEAPLRQFETKYERLSTGRGYVSRRRKESLVPGCELPLHQENSEMCNVVFPPQPESGNSGGGWF</sequence>
<accession>D4A1W8</accession>
<organism>
    <name type="scientific">Rattus norvegicus</name>
    <name type="common">Rat</name>
    <dbReference type="NCBI Taxonomy" id="10116"/>
    <lineage>
        <taxon>Eukaryota</taxon>
        <taxon>Metazoa</taxon>
        <taxon>Chordata</taxon>
        <taxon>Craniata</taxon>
        <taxon>Vertebrata</taxon>
        <taxon>Euteleostomi</taxon>
        <taxon>Mammalia</taxon>
        <taxon>Eutheria</taxon>
        <taxon>Euarchontoglires</taxon>
        <taxon>Glires</taxon>
        <taxon>Rodentia</taxon>
        <taxon>Myomorpha</taxon>
        <taxon>Muroidea</taxon>
        <taxon>Muridae</taxon>
        <taxon>Murinae</taxon>
        <taxon>Rattus</taxon>
    </lineage>
</organism>
<evidence type="ECO:0000250" key="1">
    <source>
        <dbReference type="UniProtKB" id="O08601"/>
    </source>
</evidence>
<evidence type="ECO:0000250" key="2">
    <source>
        <dbReference type="UniProtKB" id="P55157"/>
    </source>
</evidence>
<evidence type="ECO:0000255" key="3"/>
<evidence type="ECO:0000255" key="4">
    <source>
        <dbReference type="PROSITE-ProRule" id="PRU00557"/>
    </source>
</evidence>
<evidence type="ECO:0000269" key="5">
    <source>
    </source>
</evidence>
<evidence type="ECO:0000269" key="6">
    <source>
    </source>
</evidence>
<evidence type="ECO:0000305" key="7">
    <source>
    </source>
</evidence>
<evidence type="ECO:0000305" key="8">
    <source>
    </source>
</evidence>